<keyword id="KW-0378">Hydrolase</keyword>
<keyword id="KW-0460">Magnesium</keyword>
<keyword id="KW-0479">Metal-binding</keyword>
<accession>B2ILZ2</accession>
<name>NTDP_STRPS</name>
<protein>
    <recommendedName>
        <fullName evidence="1">Nucleoside triphosphate/diphosphate phosphatase</fullName>
        <ecNumber evidence="1">3.6.1.15</ecNumber>
        <ecNumber evidence="1">3.6.1.6</ecNumber>
    </recommendedName>
</protein>
<gene>
    <name type="ordered locus">SPCG_1878</name>
</gene>
<sequence length="177" mass="21338">MKLPKEGDFITIQSYKHDGSLHRTWRDTMVLKTTENAIIGVNDHTLVTESDGRRWVTREPAIVYFHKKYWFNIIAMIRDNGTSYYCNMASPYYLDEEALKYIDYDLDVKIFTDGEKRLLDVEEYERHKRKMNYSDDLDYILKEHVKILVDWINNGRGPFSEAYVNIWYKRYVELKNR</sequence>
<evidence type="ECO:0000255" key="1">
    <source>
        <dbReference type="HAMAP-Rule" id="MF_01568"/>
    </source>
</evidence>
<feature type="chain" id="PRO_1000199754" description="Nucleoside triphosphate/diphosphate phosphatase">
    <location>
        <begin position="1"/>
        <end position="177"/>
    </location>
</feature>
<feature type="active site" description="Proton donor" evidence="1">
    <location>
        <position position="23"/>
    </location>
</feature>
<feature type="binding site" evidence="1">
    <location>
        <position position="87"/>
    </location>
    <ligand>
        <name>Mg(2+)</name>
        <dbReference type="ChEBI" id="CHEBI:18420"/>
        <label>1</label>
    </ligand>
</feature>
<feature type="binding site" evidence="1">
    <location>
        <position position="103"/>
    </location>
    <ligand>
        <name>Mg(2+)</name>
        <dbReference type="ChEBI" id="CHEBI:18420"/>
        <label>1</label>
    </ligand>
</feature>
<feature type="binding site" evidence="1">
    <location>
        <position position="105"/>
    </location>
    <ligand>
        <name>Mg(2+)</name>
        <dbReference type="ChEBI" id="CHEBI:18420"/>
        <label>2</label>
    </ligand>
</feature>
<feature type="binding site" evidence="1">
    <location>
        <position position="107"/>
    </location>
    <ligand>
        <name>Mg(2+)</name>
        <dbReference type="ChEBI" id="CHEBI:18420"/>
        <label>1</label>
    </ligand>
</feature>
<feature type="binding site" evidence="1">
    <location>
        <position position="107"/>
    </location>
    <ligand>
        <name>Mg(2+)</name>
        <dbReference type="ChEBI" id="CHEBI:18420"/>
        <label>2</label>
    </ligand>
</feature>
<feature type="binding site" evidence="1">
    <location>
        <position position="120"/>
    </location>
    <ligand>
        <name>Mg(2+)</name>
        <dbReference type="ChEBI" id="CHEBI:18420"/>
        <label>2</label>
    </ligand>
</feature>
<feature type="binding site" evidence="1">
    <location>
        <position position="123"/>
    </location>
    <ligand>
        <name>Mg(2+)</name>
        <dbReference type="ChEBI" id="CHEBI:18420"/>
        <label>2</label>
    </ligand>
</feature>
<comment type="function">
    <text evidence="1">Has nucleoside phosphatase activity towards nucleoside triphosphates and nucleoside diphosphates.</text>
</comment>
<comment type="catalytic activity">
    <reaction evidence="1">
        <text>a ribonucleoside 5'-triphosphate + H2O = a ribonucleoside 5'-diphosphate + phosphate + H(+)</text>
        <dbReference type="Rhea" id="RHEA:23680"/>
        <dbReference type="ChEBI" id="CHEBI:15377"/>
        <dbReference type="ChEBI" id="CHEBI:15378"/>
        <dbReference type="ChEBI" id="CHEBI:43474"/>
        <dbReference type="ChEBI" id="CHEBI:57930"/>
        <dbReference type="ChEBI" id="CHEBI:61557"/>
        <dbReference type="EC" id="3.6.1.15"/>
    </reaction>
</comment>
<comment type="catalytic activity">
    <reaction evidence="1">
        <text>a ribonucleoside 5'-diphosphate + H2O = a ribonucleoside 5'-phosphate + phosphate + H(+)</text>
        <dbReference type="Rhea" id="RHEA:36799"/>
        <dbReference type="ChEBI" id="CHEBI:15377"/>
        <dbReference type="ChEBI" id="CHEBI:15378"/>
        <dbReference type="ChEBI" id="CHEBI:43474"/>
        <dbReference type="ChEBI" id="CHEBI:57930"/>
        <dbReference type="ChEBI" id="CHEBI:58043"/>
        <dbReference type="EC" id="3.6.1.6"/>
    </reaction>
</comment>
<comment type="cofactor">
    <cofactor evidence="1">
        <name>Mg(2+)</name>
        <dbReference type="ChEBI" id="CHEBI:18420"/>
    </cofactor>
</comment>
<comment type="similarity">
    <text evidence="1">Belongs to the Ntdp family.</text>
</comment>
<reference key="1">
    <citation type="journal article" date="2009" name="BMC Genomics">
        <title>Genome evolution driven by host adaptations results in a more virulent and antimicrobial-resistant Streptococcus pneumoniae serotype 14.</title>
        <authorList>
            <person name="Ding F."/>
            <person name="Tang P."/>
            <person name="Hsu M.-H."/>
            <person name="Cui P."/>
            <person name="Hu S."/>
            <person name="Yu J."/>
            <person name="Chiu C.-H."/>
        </authorList>
    </citation>
    <scope>NUCLEOTIDE SEQUENCE [LARGE SCALE GENOMIC DNA]</scope>
    <source>
        <strain>CGSP14</strain>
    </source>
</reference>
<dbReference type="EC" id="3.6.1.15" evidence="1"/>
<dbReference type="EC" id="3.6.1.6" evidence="1"/>
<dbReference type="EMBL" id="CP001033">
    <property type="protein sequence ID" value="ACB91130.1"/>
    <property type="molecule type" value="Genomic_DNA"/>
</dbReference>
<dbReference type="RefSeq" id="WP_000775321.1">
    <property type="nucleotide sequence ID" value="NC_010582.1"/>
</dbReference>
<dbReference type="SMR" id="B2ILZ2"/>
<dbReference type="KEGG" id="spw:SPCG_1878"/>
<dbReference type="HOGENOM" id="CLU_109787_1_0_9"/>
<dbReference type="GO" id="GO:0000287">
    <property type="term" value="F:magnesium ion binding"/>
    <property type="evidence" value="ECO:0007669"/>
    <property type="project" value="UniProtKB-UniRule"/>
</dbReference>
<dbReference type="GO" id="GO:0017110">
    <property type="term" value="F:nucleoside diphosphate phosphatase activity"/>
    <property type="evidence" value="ECO:0007669"/>
    <property type="project" value="UniProtKB-UniRule"/>
</dbReference>
<dbReference type="GO" id="GO:0017111">
    <property type="term" value="F:ribonucleoside triphosphate phosphatase activity"/>
    <property type="evidence" value="ECO:0007669"/>
    <property type="project" value="UniProtKB-UniRule"/>
</dbReference>
<dbReference type="Gene3D" id="2.40.380.10">
    <property type="entry name" value="FomD-like"/>
    <property type="match status" value="1"/>
</dbReference>
<dbReference type="HAMAP" id="MF_01568">
    <property type="entry name" value="Ntdp"/>
    <property type="match status" value="1"/>
</dbReference>
<dbReference type="InterPro" id="IPR007295">
    <property type="entry name" value="DUF402"/>
</dbReference>
<dbReference type="InterPro" id="IPR035930">
    <property type="entry name" value="FomD-like_sf"/>
</dbReference>
<dbReference type="InterPro" id="IPR050212">
    <property type="entry name" value="Ntdp-like"/>
</dbReference>
<dbReference type="InterPro" id="IPR016882">
    <property type="entry name" value="SA1684"/>
</dbReference>
<dbReference type="NCBIfam" id="NF010183">
    <property type="entry name" value="PRK13662.1"/>
    <property type="match status" value="1"/>
</dbReference>
<dbReference type="PANTHER" id="PTHR39159">
    <property type="match status" value="1"/>
</dbReference>
<dbReference type="PANTHER" id="PTHR39159:SF1">
    <property type="entry name" value="UPF0374 PROTEIN YGAC"/>
    <property type="match status" value="1"/>
</dbReference>
<dbReference type="Pfam" id="PF04167">
    <property type="entry name" value="DUF402"/>
    <property type="match status" value="1"/>
</dbReference>
<dbReference type="PIRSF" id="PIRSF028345">
    <property type="entry name" value="UCP028345"/>
    <property type="match status" value="1"/>
</dbReference>
<dbReference type="SUPFAM" id="SSF159234">
    <property type="entry name" value="FomD-like"/>
    <property type="match status" value="1"/>
</dbReference>
<organism>
    <name type="scientific">Streptococcus pneumoniae (strain CGSP14)</name>
    <dbReference type="NCBI Taxonomy" id="516950"/>
    <lineage>
        <taxon>Bacteria</taxon>
        <taxon>Bacillati</taxon>
        <taxon>Bacillota</taxon>
        <taxon>Bacilli</taxon>
        <taxon>Lactobacillales</taxon>
        <taxon>Streptococcaceae</taxon>
        <taxon>Streptococcus</taxon>
    </lineage>
</organism>
<proteinExistence type="inferred from homology"/>